<comment type="function">
    <text evidence="1">Effector protein for Rho-type GTPases that regulates actin filament reorganization via its interaction with the Arp2/3 complex. Important for efficient actin polymerization. Possible regulator of lymphocyte and platelet function. Mediates actin filament reorganization and the formation of actin pedestals upon infection by pathogenic bacteria. In addition to its role in the cytoplasmic cytoskeleton, also promotes actin polymerization in the nucleus, thereby regulating gene transcription and repair of damaged DNA. Promotes homologous recombination (HR) repair in response to DNA damage by promoting nuclear actin polymerization, leading to drive motility of double-strand breaks (DSBs).</text>
</comment>
<comment type="subunit">
    <text evidence="1 6 7 8">Binds the Arp2/3 complex (By similarity). Interacts with CDC42, RAC, NCK, HCK, FYN, SRC kinase FGR, BTK, ABL1, PSTPIP1, WIP, and to the p85 subunit of PLC-gamma (PubMed:9488710). Interacts (via C-terminus) with ALDOA (By similarity). Interacts with NCK1 (via SH3 domains) (PubMed:8910519). Interacts with FCHSD2 (PubMed:23437151).</text>
</comment>
<comment type="interaction">
    <interactant intactId="EBI-644195">
        <id>P70315</id>
    </interactant>
    <interactant intactId="EBI-643605">
        <id>Q8BKC5</id>
        <label>Ipo5</label>
    </interactant>
    <organismsDiffer>false</organismsDiffer>
    <experiments>8</experiments>
</comment>
<comment type="interaction">
    <interactant intactId="EBI-644195">
        <id>P70315</id>
    </interactant>
    <interactant intactId="EBI-298680">
        <id>P05480</id>
        <label>Src</label>
    </interactant>
    <organismsDiffer>false</organismsDiffer>
    <experiments>2</experiments>
</comment>
<comment type="interaction">
    <interactant intactId="EBI-644195">
        <id>P70315</id>
    </interactant>
    <interactant intactId="EBI-644216">
        <id>Q8K1I7</id>
        <label>Wipf1</label>
    </interactant>
    <organismsDiffer>false</organismsDiffer>
    <experiments>3</experiments>
</comment>
<comment type="subcellular location">
    <subcellularLocation>
        <location evidence="1">Cytoplasm</location>
        <location evidence="1">Cytoskeleton</location>
    </subcellularLocation>
    <subcellularLocation>
        <location evidence="1">Nucleus</location>
    </subcellularLocation>
</comment>
<comment type="domain">
    <text>The WH1 (Wasp homology 1) domain may bind a Pro-rich ligand.</text>
</comment>
<comment type="domain">
    <text>The CRIB (Cdc42/Rac-interactive-binding) region binds to the C-terminal WH2 domain in the autoinhibited state of the protein. Binding of Rho-type GTPases to the CRIB induces a conformation change and leads to activation.</text>
</comment>
<comment type="PTM">
    <text evidence="1">Phosphorylated at Tyr-293 by FYN and HCK, inducing WAS effector activity after TCR engagement. Phosphorylation at Tyr-293 enhances WAS activity in promoting actin polymerization and filopodia formation.</text>
</comment>
<gene>
    <name type="primary">Was</name>
    <name type="synonym">Wasp</name>
</gene>
<evidence type="ECO:0000250" key="1">
    <source>
        <dbReference type="UniProtKB" id="P42768"/>
    </source>
</evidence>
<evidence type="ECO:0000255" key="2">
    <source>
        <dbReference type="PROSITE-ProRule" id="PRU00057"/>
    </source>
</evidence>
<evidence type="ECO:0000255" key="3">
    <source>
        <dbReference type="PROSITE-ProRule" id="PRU00406"/>
    </source>
</evidence>
<evidence type="ECO:0000255" key="4">
    <source>
        <dbReference type="PROSITE-ProRule" id="PRU00410"/>
    </source>
</evidence>
<evidence type="ECO:0000256" key="5">
    <source>
        <dbReference type="SAM" id="MobiDB-lite"/>
    </source>
</evidence>
<evidence type="ECO:0000269" key="6">
    <source>
    </source>
</evidence>
<evidence type="ECO:0000269" key="7">
    <source>
    </source>
</evidence>
<evidence type="ECO:0000269" key="8">
    <source>
    </source>
</evidence>
<evidence type="ECO:0000305" key="9"/>
<evidence type="ECO:0007744" key="10">
    <source>
    </source>
</evidence>
<evidence type="ECO:0007744" key="11">
    <source>
    </source>
</evidence>
<evidence type="ECO:0007744" key="12">
    <source>
    </source>
</evidence>
<feature type="chain" id="PRO_0000188991" description="Actin nucleation-promoting factor WAS">
    <location>
        <begin position="1"/>
        <end position="520"/>
    </location>
</feature>
<feature type="domain" description="WH1" evidence="4">
    <location>
        <begin position="41"/>
        <end position="150"/>
    </location>
</feature>
<feature type="domain" description="CRIB" evidence="2">
    <location>
        <begin position="240"/>
        <end position="253"/>
    </location>
</feature>
<feature type="repeat" description="GRSGPLPPXP motif 1">
    <location>
        <begin position="354"/>
        <end position="363"/>
    </location>
</feature>
<feature type="repeat" description="GRSGPLPPXP motif 2">
    <location>
        <begin position="393"/>
        <end position="402"/>
    </location>
</feature>
<feature type="domain" description="WH2" evidence="3">
    <location>
        <begin position="448"/>
        <end position="465"/>
    </location>
</feature>
<feature type="region of interest" description="Disordered" evidence="5">
    <location>
        <begin position="1"/>
        <end position="23"/>
    </location>
</feature>
<feature type="region of interest" description="Disordered" evidence="5">
    <location>
        <begin position="148"/>
        <end position="247"/>
    </location>
</feature>
<feature type="region of interest" description="Disordered" evidence="5">
    <location>
        <begin position="307"/>
        <end position="520"/>
    </location>
</feature>
<feature type="compositionally biased region" description="Gly residues" evidence="5">
    <location>
        <begin position="1"/>
        <end position="17"/>
    </location>
</feature>
<feature type="compositionally biased region" description="Polar residues" evidence="5">
    <location>
        <begin position="203"/>
        <end position="213"/>
    </location>
</feature>
<feature type="compositionally biased region" description="Gly residues" evidence="5">
    <location>
        <begin position="323"/>
        <end position="342"/>
    </location>
</feature>
<feature type="compositionally biased region" description="Pro residues" evidence="5">
    <location>
        <begin position="358"/>
        <end position="437"/>
    </location>
</feature>
<feature type="compositionally biased region" description="Polar residues" evidence="5">
    <location>
        <begin position="471"/>
        <end position="482"/>
    </location>
</feature>
<feature type="compositionally biased region" description="Acidic residues" evidence="5">
    <location>
        <begin position="504"/>
        <end position="520"/>
    </location>
</feature>
<feature type="modified residue" description="Phosphotyrosine" evidence="10 11 12">
    <location>
        <position position="293"/>
    </location>
</feature>
<feature type="modified residue" description="Phosphoserine" evidence="11 12">
    <location>
        <position position="501"/>
    </location>
</feature>
<feature type="modified residue" description="Phosphoserine" evidence="11 12">
    <location>
        <position position="502"/>
    </location>
</feature>
<accession>P70315</accession>
<protein>
    <recommendedName>
        <fullName evidence="9">Actin nucleation-promoting factor WAS</fullName>
    </recommendedName>
    <alternativeName>
        <fullName>Wiskott-Aldrich syndrome protein homolog</fullName>
        <shortName>WASp</shortName>
    </alternativeName>
</protein>
<dbReference type="EMBL" id="U54788">
    <property type="protein sequence ID" value="AAC52556.1"/>
    <property type="molecule type" value="mRNA"/>
</dbReference>
<dbReference type="CCDS" id="CCDS29984.1"/>
<dbReference type="RefSeq" id="NP_033541.1">
    <property type="nucleotide sequence ID" value="NM_009515.2"/>
</dbReference>
<dbReference type="BMRB" id="P70315"/>
<dbReference type="SMR" id="P70315"/>
<dbReference type="BioGRID" id="204544">
    <property type="interactions" value="11"/>
</dbReference>
<dbReference type="CORUM" id="P70315"/>
<dbReference type="DIP" id="DIP-36426N"/>
<dbReference type="FunCoup" id="P70315">
    <property type="interactions" value="610"/>
</dbReference>
<dbReference type="IntAct" id="P70315">
    <property type="interactions" value="29"/>
</dbReference>
<dbReference type="MINT" id="P70315"/>
<dbReference type="STRING" id="10090.ENSMUSP00000033505"/>
<dbReference type="GlyGen" id="P70315">
    <property type="glycosylation" value="3 sites"/>
</dbReference>
<dbReference type="iPTMnet" id="P70315"/>
<dbReference type="PhosphoSitePlus" id="P70315"/>
<dbReference type="jPOST" id="P70315"/>
<dbReference type="PaxDb" id="10090-ENSMUSP00000033505"/>
<dbReference type="PeptideAtlas" id="P70315"/>
<dbReference type="ProteomicsDB" id="297625"/>
<dbReference type="Antibodypedia" id="701">
    <property type="antibodies" value="516 antibodies from 42 providers"/>
</dbReference>
<dbReference type="DNASU" id="22376"/>
<dbReference type="Ensembl" id="ENSMUST00000033505.7">
    <property type="protein sequence ID" value="ENSMUSP00000033505.7"/>
    <property type="gene ID" value="ENSMUSG00000031165.7"/>
</dbReference>
<dbReference type="GeneID" id="22376"/>
<dbReference type="KEGG" id="mmu:22376"/>
<dbReference type="UCSC" id="uc009sns.2">
    <property type="organism name" value="mouse"/>
</dbReference>
<dbReference type="AGR" id="MGI:105059"/>
<dbReference type="CTD" id="7454"/>
<dbReference type="MGI" id="MGI:105059">
    <property type="gene designation" value="Was"/>
</dbReference>
<dbReference type="VEuPathDB" id="HostDB:ENSMUSG00000031165"/>
<dbReference type="eggNOG" id="KOG3671">
    <property type="taxonomic scope" value="Eukaryota"/>
</dbReference>
<dbReference type="GeneTree" id="ENSGT00730000110895"/>
<dbReference type="HOGENOM" id="CLU_015385_3_2_1"/>
<dbReference type="InParanoid" id="P70315"/>
<dbReference type="OMA" id="HIQHIGW"/>
<dbReference type="OrthoDB" id="8963340at2759"/>
<dbReference type="PhylomeDB" id="P70315"/>
<dbReference type="TreeFam" id="TF316736"/>
<dbReference type="BioGRID-ORCS" id="22376">
    <property type="hits" value="2 hits in 78 CRISPR screens"/>
</dbReference>
<dbReference type="PRO" id="PR:P70315"/>
<dbReference type="Proteomes" id="UP000000589">
    <property type="component" value="Chromosome X"/>
</dbReference>
<dbReference type="RNAct" id="P70315">
    <property type="molecule type" value="protein"/>
</dbReference>
<dbReference type="Bgee" id="ENSMUSG00000031165">
    <property type="expression patterns" value="Expressed in granulocyte and 99 other cell types or tissues"/>
</dbReference>
<dbReference type="ExpressionAtlas" id="P70315">
    <property type="expression patterns" value="baseline and differential"/>
</dbReference>
<dbReference type="GO" id="GO:0005884">
    <property type="term" value="C:actin filament"/>
    <property type="evidence" value="ECO:0007669"/>
    <property type="project" value="Ensembl"/>
</dbReference>
<dbReference type="GO" id="GO:0005911">
    <property type="term" value="C:cell-cell junction"/>
    <property type="evidence" value="ECO:0000314"/>
    <property type="project" value="MGI"/>
</dbReference>
<dbReference type="GO" id="GO:0005829">
    <property type="term" value="C:cytosol"/>
    <property type="evidence" value="ECO:0000304"/>
    <property type="project" value="Reactome"/>
</dbReference>
<dbReference type="GO" id="GO:0005634">
    <property type="term" value="C:nucleus"/>
    <property type="evidence" value="ECO:0000250"/>
    <property type="project" value="UniProtKB"/>
</dbReference>
<dbReference type="GO" id="GO:0045335">
    <property type="term" value="C:phagocytic vesicle"/>
    <property type="evidence" value="ECO:0000314"/>
    <property type="project" value="MGI"/>
</dbReference>
<dbReference type="GO" id="GO:0005886">
    <property type="term" value="C:plasma membrane"/>
    <property type="evidence" value="ECO:0007669"/>
    <property type="project" value="Ensembl"/>
</dbReference>
<dbReference type="GO" id="GO:0035861">
    <property type="term" value="C:site of double-strand break"/>
    <property type="evidence" value="ECO:0000250"/>
    <property type="project" value="UniProtKB"/>
</dbReference>
<dbReference type="GO" id="GO:0012506">
    <property type="term" value="C:vesicle membrane"/>
    <property type="evidence" value="ECO:0000314"/>
    <property type="project" value="MGI"/>
</dbReference>
<dbReference type="GO" id="GO:0003779">
    <property type="term" value="F:actin binding"/>
    <property type="evidence" value="ECO:0007669"/>
    <property type="project" value="InterPro"/>
</dbReference>
<dbReference type="GO" id="GO:0042802">
    <property type="term" value="F:identical protein binding"/>
    <property type="evidence" value="ECO:0000314"/>
    <property type="project" value="MGI"/>
</dbReference>
<dbReference type="GO" id="GO:0043274">
    <property type="term" value="F:phospholipase binding"/>
    <property type="evidence" value="ECO:0007669"/>
    <property type="project" value="Ensembl"/>
</dbReference>
<dbReference type="GO" id="GO:0019901">
    <property type="term" value="F:protein kinase binding"/>
    <property type="evidence" value="ECO:0007669"/>
    <property type="project" value="Ensembl"/>
</dbReference>
<dbReference type="GO" id="GO:0017124">
    <property type="term" value="F:SH3 domain binding"/>
    <property type="evidence" value="ECO:0007669"/>
    <property type="project" value="Ensembl"/>
</dbReference>
<dbReference type="GO" id="GO:0031267">
    <property type="term" value="F:small GTPase binding"/>
    <property type="evidence" value="ECO:0007669"/>
    <property type="project" value="Ensembl"/>
</dbReference>
<dbReference type="GO" id="GO:0030041">
    <property type="term" value="P:actin filament polymerization"/>
    <property type="evidence" value="ECO:0000314"/>
    <property type="project" value="MGI"/>
</dbReference>
<dbReference type="GO" id="GO:0030048">
    <property type="term" value="P:actin filament-based movement"/>
    <property type="evidence" value="ECO:0000314"/>
    <property type="project" value="MGI"/>
</dbReference>
<dbReference type="GO" id="GO:0008154">
    <property type="term" value="P:actin polymerization or depolymerization"/>
    <property type="evidence" value="ECO:0000314"/>
    <property type="project" value="MGI"/>
</dbReference>
<dbReference type="GO" id="GO:0032488">
    <property type="term" value="P:Cdc42 protein signal transduction"/>
    <property type="evidence" value="ECO:0007669"/>
    <property type="project" value="Ensembl"/>
</dbReference>
<dbReference type="GO" id="GO:0071346">
    <property type="term" value="P:cellular response to type II interferon"/>
    <property type="evidence" value="ECO:0000314"/>
    <property type="project" value="MGI"/>
</dbReference>
<dbReference type="GO" id="GO:0016197">
    <property type="term" value="P:endosomal transport"/>
    <property type="evidence" value="ECO:0000314"/>
    <property type="project" value="MGI"/>
</dbReference>
<dbReference type="GO" id="GO:2000146">
    <property type="term" value="P:negative regulation of cell motility"/>
    <property type="evidence" value="ECO:0007669"/>
    <property type="project" value="Ensembl"/>
</dbReference>
<dbReference type="GO" id="GO:0051497">
    <property type="term" value="P:negative regulation of stress fiber assembly"/>
    <property type="evidence" value="ECO:0007669"/>
    <property type="project" value="Ensembl"/>
</dbReference>
<dbReference type="GO" id="GO:1905168">
    <property type="term" value="P:positive regulation of double-strand break repair via homologous recombination"/>
    <property type="evidence" value="ECO:0000250"/>
    <property type="project" value="UniProtKB"/>
</dbReference>
<dbReference type="GO" id="GO:0045944">
    <property type="term" value="P:positive regulation of transcription by RNA polymerase II"/>
    <property type="evidence" value="ECO:0000250"/>
    <property type="project" value="UniProtKB"/>
</dbReference>
<dbReference type="GO" id="GO:0008064">
    <property type="term" value="P:regulation of actin polymerization or depolymerization"/>
    <property type="evidence" value="ECO:0007669"/>
    <property type="project" value="Ensembl"/>
</dbReference>
<dbReference type="GO" id="GO:0010591">
    <property type="term" value="P:regulation of lamellipodium assembly"/>
    <property type="evidence" value="ECO:0007669"/>
    <property type="project" value="Ensembl"/>
</dbReference>
<dbReference type="GO" id="GO:0002625">
    <property type="term" value="P:regulation of T cell antigen processing and presentation"/>
    <property type="evidence" value="ECO:0007669"/>
    <property type="project" value="Ensembl"/>
</dbReference>
<dbReference type="GO" id="GO:0042110">
    <property type="term" value="P:T cell activation"/>
    <property type="evidence" value="ECO:0000315"/>
    <property type="project" value="MGI"/>
</dbReference>
<dbReference type="CDD" id="cd00132">
    <property type="entry name" value="CRIB"/>
    <property type="match status" value="1"/>
</dbReference>
<dbReference type="CDD" id="cd01205">
    <property type="entry name" value="EVH1_WASP-like"/>
    <property type="match status" value="1"/>
</dbReference>
<dbReference type="FunFam" id="2.30.29.30:FF:000130">
    <property type="entry name" value="neural Wiskott-Aldrich syndrome protein"/>
    <property type="match status" value="1"/>
</dbReference>
<dbReference type="FunFam" id="3.90.810.10:FF:000003">
    <property type="entry name" value="Neural Wiskott-Aldrich syndrome protein-like"/>
    <property type="match status" value="1"/>
</dbReference>
<dbReference type="FunFam" id="3.90.810.10:FF:000008">
    <property type="entry name" value="wiskott-Aldrich syndrome protein"/>
    <property type="match status" value="1"/>
</dbReference>
<dbReference type="Gene3D" id="3.90.810.10">
    <property type="entry name" value="CRIB domain"/>
    <property type="match status" value="2"/>
</dbReference>
<dbReference type="Gene3D" id="2.30.29.30">
    <property type="entry name" value="Pleckstrin-homology domain (PH domain)/Phosphotyrosine-binding domain (PTB)"/>
    <property type="match status" value="1"/>
</dbReference>
<dbReference type="InterPro" id="IPR000095">
    <property type="entry name" value="CRIB_dom"/>
</dbReference>
<dbReference type="InterPro" id="IPR036936">
    <property type="entry name" value="CRIB_dom_sf"/>
</dbReference>
<dbReference type="InterPro" id="IPR011993">
    <property type="entry name" value="PH-like_dom_sf"/>
</dbReference>
<dbReference type="InterPro" id="IPR011026">
    <property type="entry name" value="WAS_C"/>
</dbReference>
<dbReference type="InterPro" id="IPR033927">
    <property type="entry name" value="WASPfam_EVH1"/>
</dbReference>
<dbReference type="InterPro" id="IPR000697">
    <property type="entry name" value="WH1/EVH1_dom"/>
</dbReference>
<dbReference type="InterPro" id="IPR003124">
    <property type="entry name" value="WH2_dom"/>
</dbReference>
<dbReference type="Pfam" id="PF00786">
    <property type="entry name" value="PBD"/>
    <property type="match status" value="1"/>
</dbReference>
<dbReference type="Pfam" id="PF00568">
    <property type="entry name" value="WH1"/>
    <property type="match status" value="1"/>
</dbReference>
<dbReference type="Pfam" id="PF02205">
    <property type="entry name" value="WH2"/>
    <property type="match status" value="1"/>
</dbReference>
<dbReference type="SMART" id="SM00285">
    <property type="entry name" value="PBD"/>
    <property type="match status" value="1"/>
</dbReference>
<dbReference type="SMART" id="SM00461">
    <property type="entry name" value="WH1"/>
    <property type="match status" value="1"/>
</dbReference>
<dbReference type="SMART" id="SM00246">
    <property type="entry name" value="WH2"/>
    <property type="match status" value="1"/>
</dbReference>
<dbReference type="SUPFAM" id="SSF50729">
    <property type="entry name" value="PH domain-like"/>
    <property type="match status" value="1"/>
</dbReference>
<dbReference type="SUPFAM" id="SSF47912">
    <property type="entry name" value="Wiscott-Aldrich syndrome protein, WASP, C-terminal domain"/>
    <property type="match status" value="2"/>
</dbReference>
<dbReference type="PROSITE" id="PS50108">
    <property type="entry name" value="CRIB"/>
    <property type="match status" value="1"/>
</dbReference>
<dbReference type="PROSITE" id="PS50229">
    <property type="entry name" value="WH1"/>
    <property type="match status" value="1"/>
</dbReference>
<dbReference type="PROSITE" id="PS51082">
    <property type="entry name" value="WH2"/>
    <property type="match status" value="1"/>
</dbReference>
<organism>
    <name type="scientific">Mus musculus</name>
    <name type="common">Mouse</name>
    <dbReference type="NCBI Taxonomy" id="10090"/>
    <lineage>
        <taxon>Eukaryota</taxon>
        <taxon>Metazoa</taxon>
        <taxon>Chordata</taxon>
        <taxon>Craniata</taxon>
        <taxon>Vertebrata</taxon>
        <taxon>Euteleostomi</taxon>
        <taxon>Mammalia</taxon>
        <taxon>Eutheria</taxon>
        <taxon>Euarchontoglires</taxon>
        <taxon>Glires</taxon>
        <taxon>Rodentia</taxon>
        <taxon>Myomorpha</taxon>
        <taxon>Muroidea</taxon>
        <taxon>Muridae</taxon>
        <taxon>Murinae</taxon>
        <taxon>Mus</taxon>
        <taxon>Mus</taxon>
    </lineage>
</organism>
<reference key="1">
    <citation type="journal article" date="1995" name="Genomics">
        <title>The mouse homolog of the Wiskott-Aldrich syndrome protein (WASP) gene is highly conserved and maps near the scurfy (sf) mutation on the X chromosome.</title>
        <authorList>
            <person name="Derry J.M.J."/>
            <person name="Wiedemann P."/>
            <person name="Blair P."/>
            <person name="Wang Y."/>
            <person name="Kerns J.A."/>
            <person name="Lemahieu V."/>
            <person name="Godfrey V.L."/>
            <person name="Wilkinson J.E."/>
            <person name="Francke U."/>
        </authorList>
    </citation>
    <scope>NUCLEOTIDE SEQUENCE [MRNA]</scope>
    <source>
        <strain>BALB/cJ</strain>
    </source>
</reference>
<reference key="2">
    <citation type="journal article" date="1996" name="J. Biol. Chem.">
        <title>Isolation of a NCK-associated kinase, PRK2, an SH3-binding protein and potential effector of Rho protein signaling.</title>
        <authorList>
            <person name="Quilliam L.A."/>
            <person name="Lambert Q.T."/>
            <person name="Mickelson-Young L.A."/>
            <person name="Westwick J.K."/>
            <person name="Sparks A.B."/>
            <person name="Kay B.K."/>
            <person name="Jenkins N.A."/>
            <person name="Gilbert D.J."/>
            <person name="Copeland N.G."/>
            <person name="Der C.J."/>
        </authorList>
    </citation>
    <scope>INTERACTION WITH NCK1</scope>
</reference>
<reference key="3">
    <citation type="journal article" date="1998" name="J. Biol. Chem.">
        <title>Tyrosine phosphorylation regulates the SH3-mediated binding of the Wiskott-Aldrich syndrome protein to PSTPIP, a cytoskeletal-associated protein.</title>
        <authorList>
            <person name="Wu Y."/>
            <person name="Spencer S.D."/>
            <person name="Lasky L.A."/>
        </authorList>
    </citation>
    <scope>INTERACTION WITH PSTPIP1</scope>
</reference>
<reference key="4">
    <citation type="journal article" date="2007" name="J. Immunol.">
        <title>Quantitative time-resolved phosphoproteomic analysis of mast cell signaling.</title>
        <authorList>
            <person name="Cao L."/>
            <person name="Yu K."/>
            <person name="Banh C."/>
            <person name="Nguyen V."/>
            <person name="Ritz A."/>
            <person name="Raphael B.J."/>
            <person name="Kawakami Y."/>
            <person name="Kawakami T."/>
            <person name="Salomon A.R."/>
        </authorList>
    </citation>
    <scope>PHOSPHORYLATION [LARGE SCALE ANALYSIS] AT TYR-293</scope>
    <scope>IDENTIFICATION BY MASS SPECTROMETRY [LARGE SCALE ANALYSIS]</scope>
    <source>
        <tissue>Mast cell</tissue>
    </source>
</reference>
<reference key="5">
    <citation type="journal article" date="2009" name="Immunity">
        <title>The phagosomal proteome in interferon-gamma-activated macrophages.</title>
        <authorList>
            <person name="Trost M."/>
            <person name="English L."/>
            <person name="Lemieux S."/>
            <person name="Courcelles M."/>
            <person name="Desjardins M."/>
            <person name="Thibault P."/>
        </authorList>
    </citation>
    <scope>PHOSPHORYLATION [LARGE SCALE ANALYSIS] AT TYR-293; SER-501 AND SER-502</scope>
    <scope>IDENTIFICATION BY MASS SPECTROMETRY [LARGE SCALE ANALYSIS]</scope>
</reference>
<reference key="6">
    <citation type="journal article" date="2010" name="Cell">
        <title>A tissue-specific atlas of mouse protein phosphorylation and expression.</title>
        <authorList>
            <person name="Huttlin E.L."/>
            <person name="Jedrychowski M.P."/>
            <person name="Elias J.E."/>
            <person name="Goswami T."/>
            <person name="Rad R."/>
            <person name="Beausoleil S.A."/>
            <person name="Villen J."/>
            <person name="Haas W."/>
            <person name="Sowa M.E."/>
            <person name="Gygi S.P."/>
        </authorList>
    </citation>
    <scope>PHOSPHORYLATION [LARGE SCALE ANALYSIS] AT TYR-293; SER-501 AND SER-502</scope>
    <scope>IDENTIFICATION BY MASS SPECTROMETRY [LARGE SCALE ANALYSIS]</scope>
    <source>
        <tissue>Liver</tissue>
        <tissue>Lung</tissue>
        <tissue>Spleen</tissue>
    </source>
</reference>
<reference key="7">
    <citation type="journal article" date="2013" name="PLoS ONE">
        <title>FCHSD1 and FCHSD2 are expressed in hair cell stereocilia and cuticular plate and regulate actin polymerization in vitro.</title>
        <authorList>
            <person name="Cao H."/>
            <person name="Yin X."/>
            <person name="Cao Y."/>
            <person name="Jin Y."/>
            <person name="Wang S."/>
            <person name="Kong Y."/>
            <person name="Chen Y."/>
            <person name="Gao J."/>
            <person name="Heller S."/>
            <person name="Xu Z."/>
        </authorList>
    </citation>
    <scope>INTERACTION WITH FCHSD2</scope>
</reference>
<sequence>MNSGPGPVGGRPGGRGGPAVQQNIPSNLLQDHENQRLFELLGRKCWTLATTVVQLYLALPPGAEHWTMEHCGAVCFVKDNPQKSYFIRLYGLQAGRLLWEQELYSQLVYLTPTPFFHTFAGDDCQVGLNFADESEAQAFRALVQEKIQKRNQRQSGERRQLPPPPAPINEERRGGLPPVPPHPGGDHGGPSGGPLSLGLVTVDIQNPDITSSRYRGLPAPGPGPTDKKRSGKKKISKADIGAPSGFKHVSHVGWDPQNGFDVNNLDPDLRSLFSRAGISEAQLTDAETSKLIYDFIEDQGGLEAVRQEMRRQEPLPPPPPPCRGGGGGGGGGGGGGGGGGGQPLRPPVVGSNKGRSGPLPPVPMGGAPPPPTPRGPPPPGRGGPPPPPPPATGRSGPPPPPLPGAGGPPAPPPPPPPPPPPPCPGSGPAPPPLPPTPVSGGSPAPGGGRGALLDQIRQGIQLNKTPGALENSVQQPPAQQSEGLVGALMHVMQKRSRVIHSSDEGEDQTGEDEEDDEWDD</sequence>
<name>WASP_MOUSE</name>
<keyword id="KW-0963">Cytoplasm</keyword>
<keyword id="KW-0206">Cytoskeleton</keyword>
<keyword id="KW-0539">Nucleus</keyword>
<keyword id="KW-0597">Phosphoprotein</keyword>
<keyword id="KW-1185">Reference proteome</keyword>
<keyword id="KW-0677">Repeat</keyword>
<proteinExistence type="evidence at protein level"/>